<dbReference type="EMBL" id="CP000687">
    <property type="protein sequence ID" value="ABY70224.1"/>
    <property type="molecule type" value="Genomic_DNA"/>
</dbReference>
<dbReference type="RefSeq" id="WP_005599039.1">
    <property type="nucleotide sequence ID" value="NC_010278.1"/>
</dbReference>
<dbReference type="SMR" id="B0BRW5"/>
<dbReference type="KEGG" id="apj:APJL_1672"/>
<dbReference type="HOGENOM" id="CLU_180796_4_2_6"/>
<dbReference type="Proteomes" id="UP000008547">
    <property type="component" value="Chromosome"/>
</dbReference>
<dbReference type="Gene3D" id="1.20.5.300">
    <property type="match status" value="1"/>
</dbReference>
<dbReference type="HAMAP" id="MF_00715">
    <property type="entry name" value="SlyX"/>
    <property type="match status" value="1"/>
</dbReference>
<dbReference type="InterPro" id="IPR007236">
    <property type="entry name" value="SlyX"/>
</dbReference>
<dbReference type="NCBIfam" id="NF002556">
    <property type="entry name" value="PRK02119.1"/>
    <property type="match status" value="1"/>
</dbReference>
<dbReference type="PANTHER" id="PTHR36508">
    <property type="entry name" value="PROTEIN SLYX"/>
    <property type="match status" value="1"/>
</dbReference>
<dbReference type="PANTHER" id="PTHR36508:SF1">
    <property type="entry name" value="PROTEIN SLYX"/>
    <property type="match status" value="1"/>
</dbReference>
<dbReference type="Pfam" id="PF04102">
    <property type="entry name" value="SlyX"/>
    <property type="match status" value="1"/>
</dbReference>
<reference key="1">
    <citation type="journal article" date="2008" name="PLoS ONE">
        <title>Genome biology of Actinobacillus pleuropneumoniae JL03, an isolate of serotype 3 prevalent in China.</title>
        <authorList>
            <person name="Xu Z."/>
            <person name="Zhou Y."/>
            <person name="Li L."/>
            <person name="Zhou R."/>
            <person name="Xiao S."/>
            <person name="Wan Y."/>
            <person name="Zhang S."/>
            <person name="Wang K."/>
            <person name="Li W."/>
            <person name="Li L."/>
            <person name="Jin H."/>
            <person name="Kang M."/>
            <person name="Dalai B."/>
            <person name="Li T."/>
            <person name="Liu L."/>
            <person name="Cheng Y."/>
            <person name="Zhang L."/>
            <person name="Xu T."/>
            <person name="Zheng H."/>
            <person name="Pu S."/>
            <person name="Wang B."/>
            <person name="Gu W."/>
            <person name="Zhang X.L."/>
            <person name="Zhu G.-F."/>
            <person name="Wang S."/>
            <person name="Zhao G.-P."/>
            <person name="Chen H."/>
        </authorList>
    </citation>
    <scope>NUCLEOTIDE SEQUENCE [LARGE SCALE GENOMIC DNA]</scope>
    <source>
        <strain>JL03</strain>
    </source>
</reference>
<protein>
    <recommendedName>
        <fullName evidence="1">Protein SlyX homolog</fullName>
    </recommendedName>
</protein>
<gene>
    <name evidence="1" type="primary">slyX</name>
    <name type="ordered locus">APJL_1672</name>
</gene>
<sequence>MTTENDLLNRIAELETKVAFQEITLEELNQALIHHQLALDKLQTQMRHFAEKLKGAQVSNIASQAEETPPPHY</sequence>
<comment type="similarity">
    <text evidence="1">Belongs to the SlyX family.</text>
</comment>
<name>SLYX_ACTPJ</name>
<accession>B0BRW5</accession>
<evidence type="ECO:0000255" key="1">
    <source>
        <dbReference type="HAMAP-Rule" id="MF_00715"/>
    </source>
</evidence>
<organism>
    <name type="scientific">Actinobacillus pleuropneumoniae serotype 3 (strain JL03)</name>
    <dbReference type="NCBI Taxonomy" id="434271"/>
    <lineage>
        <taxon>Bacteria</taxon>
        <taxon>Pseudomonadati</taxon>
        <taxon>Pseudomonadota</taxon>
        <taxon>Gammaproteobacteria</taxon>
        <taxon>Pasteurellales</taxon>
        <taxon>Pasteurellaceae</taxon>
        <taxon>Actinobacillus</taxon>
    </lineage>
</organism>
<proteinExistence type="inferred from homology"/>
<feature type="chain" id="PRO_1000195827" description="Protein SlyX homolog">
    <location>
        <begin position="1"/>
        <end position="73"/>
    </location>
</feature>